<accession>Q58797</accession>
<name>Y1402_METJA</name>
<keyword id="KW-1185">Reference proteome</keyword>
<keyword id="KW-0732">Signal</keyword>
<reference key="1">
    <citation type="journal article" date="1996" name="Science">
        <title>Complete genome sequence of the methanogenic archaeon, Methanococcus jannaschii.</title>
        <authorList>
            <person name="Bult C.J."/>
            <person name="White O."/>
            <person name="Olsen G.J."/>
            <person name="Zhou L."/>
            <person name="Fleischmann R.D."/>
            <person name="Sutton G.G."/>
            <person name="Blake J.A."/>
            <person name="FitzGerald L.M."/>
            <person name="Clayton R.A."/>
            <person name="Gocayne J.D."/>
            <person name="Kerlavage A.R."/>
            <person name="Dougherty B.A."/>
            <person name="Tomb J.-F."/>
            <person name="Adams M.D."/>
            <person name="Reich C.I."/>
            <person name="Overbeek R."/>
            <person name="Kirkness E.F."/>
            <person name="Weinstock K.G."/>
            <person name="Merrick J.M."/>
            <person name="Glodek A."/>
            <person name="Scott J.L."/>
            <person name="Geoghagen N.S.M."/>
            <person name="Weidman J.F."/>
            <person name="Fuhrmann J.L."/>
            <person name="Nguyen D."/>
            <person name="Utterback T.R."/>
            <person name="Kelley J.M."/>
            <person name="Peterson J.D."/>
            <person name="Sadow P.W."/>
            <person name="Hanna M.C."/>
            <person name="Cotton M.D."/>
            <person name="Roberts K.M."/>
            <person name="Hurst M.A."/>
            <person name="Kaine B.P."/>
            <person name="Borodovsky M."/>
            <person name="Klenk H.-P."/>
            <person name="Fraser C.M."/>
            <person name="Smith H.O."/>
            <person name="Woese C.R."/>
            <person name="Venter J.C."/>
        </authorList>
    </citation>
    <scope>NUCLEOTIDE SEQUENCE [LARGE SCALE GENOMIC DNA]</scope>
    <source>
        <strain>ATCC 43067 / DSM 2661 / JAL-1 / JCM 10045 / NBRC 100440</strain>
    </source>
</reference>
<evidence type="ECO:0000255" key="1"/>
<sequence length="346" mass="38064">MFEWMKNKKAISPILALLIVLGVTIVVGAVFYAWGSGLFNNSQQSTQSALEGTTSTITYAAGAIGVGVPKEIDVEGDLDLTYPTPDYKLSHLTTTDYGSYDERLIVPVPLTLENYYDSTLTNVKIESDGATEVAGLTLKKITLNYNGQNYDAYLLCTNDGTPFKGILNRTGIYPDATWTGDDGNNYTSVYYILAPNSVTGVAAVDGSKDLSVTTAKKWPYSQNDVQSMRLYAGGFNNMWYACAVNGSYSSWTNTLTATKFIGWNTAQAFYKYKTPIDAKFYTSEWDVGTLHKGEKVSKEIFFFFGSSMGFQEEPSGETTVKIPVKVVSDQGVYKQVDVNIVLKDRL</sequence>
<proteinExistence type="inferred from homology"/>
<protein>
    <recommendedName>
        <fullName>Uncharacterized protein MJ1402</fullName>
    </recommendedName>
</protein>
<dbReference type="EMBL" id="L77117">
    <property type="protein sequence ID" value="AAB99412.1"/>
    <property type="molecule type" value="Genomic_DNA"/>
</dbReference>
<dbReference type="PIR" id="A64475">
    <property type="entry name" value="A64475"/>
</dbReference>
<dbReference type="RefSeq" id="WP_010870919.1">
    <property type="nucleotide sequence ID" value="NC_000909.1"/>
</dbReference>
<dbReference type="PaxDb" id="243232-MJ_1402"/>
<dbReference type="EnsemblBacteria" id="AAB99412">
    <property type="protein sequence ID" value="AAB99412"/>
    <property type="gene ID" value="MJ_1402"/>
</dbReference>
<dbReference type="GeneID" id="1452305"/>
<dbReference type="KEGG" id="mja:MJ_1402"/>
<dbReference type="eggNOG" id="arCOG05987">
    <property type="taxonomic scope" value="Archaea"/>
</dbReference>
<dbReference type="HOGENOM" id="CLU_775263_0_0_2"/>
<dbReference type="InParanoid" id="Q58797"/>
<dbReference type="OrthoDB" id="65160at2157"/>
<dbReference type="Proteomes" id="UP000000805">
    <property type="component" value="Chromosome"/>
</dbReference>
<dbReference type="InterPro" id="IPR013373">
    <property type="entry name" value="Flagellin/pilin_N_arc"/>
</dbReference>
<dbReference type="NCBIfam" id="TIGR02537">
    <property type="entry name" value="arch_flag_Nterm"/>
    <property type="match status" value="1"/>
</dbReference>
<feature type="signal peptide" evidence="1">
    <location>
        <begin position="1"/>
        <end position="28"/>
    </location>
</feature>
<feature type="chain" id="PRO_0000014015" description="Uncharacterized protein MJ1402">
    <location>
        <begin position="29"/>
        <end position="346"/>
    </location>
</feature>
<organism>
    <name type="scientific">Methanocaldococcus jannaschii (strain ATCC 43067 / DSM 2661 / JAL-1 / JCM 10045 / NBRC 100440)</name>
    <name type="common">Methanococcus jannaschii</name>
    <dbReference type="NCBI Taxonomy" id="243232"/>
    <lineage>
        <taxon>Archaea</taxon>
        <taxon>Methanobacteriati</taxon>
        <taxon>Methanobacteriota</taxon>
        <taxon>Methanomada group</taxon>
        <taxon>Methanococci</taxon>
        <taxon>Methanococcales</taxon>
        <taxon>Methanocaldococcaceae</taxon>
        <taxon>Methanocaldococcus</taxon>
    </lineage>
</organism>
<gene>
    <name type="ordered locus">MJ1402</name>
</gene>